<proteinExistence type="inferred from homology"/>
<feature type="chain" id="PRO_0000228272" description="Holo-[acyl-carrier-protein] synthase">
    <location>
        <begin position="1"/>
        <end position="153"/>
    </location>
</feature>
<feature type="binding site" evidence="1">
    <location>
        <position position="24"/>
    </location>
    <ligand>
        <name>Mg(2+)</name>
        <dbReference type="ChEBI" id="CHEBI:18420"/>
    </ligand>
</feature>
<feature type="binding site" evidence="1">
    <location>
        <position position="78"/>
    </location>
    <ligand>
        <name>Mg(2+)</name>
        <dbReference type="ChEBI" id="CHEBI:18420"/>
    </ligand>
</feature>
<sequence length="153" mass="16593">MSSVSAAGATPPASPGCIAGIGMDLLRIERIERALARHGDRFAQKILGPEELAKFHARRRRDPARGVRFLATRFAAKEAFSKAIGLGMRMPMSWRRVQTLNALGGRPVLVIGAELADWFDARFGAAHVSITDESDMAAAYVIVERKPAPDGRP</sequence>
<accession>Q7W9J6</accession>
<comment type="function">
    <text evidence="1">Transfers the 4'-phosphopantetheine moiety from coenzyme A to a Ser of acyl-carrier-protein.</text>
</comment>
<comment type="catalytic activity">
    <reaction evidence="1">
        <text>apo-[ACP] + CoA = holo-[ACP] + adenosine 3',5'-bisphosphate + H(+)</text>
        <dbReference type="Rhea" id="RHEA:12068"/>
        <dbReference type="Rhea" id="RHEA-COMP:9685"/>
        <dbReference type="Rhea" id="RHEA-COMP:9690"/>
        <dbReference type="ChEBI" id="CHEBI:15378"/>
        <dbReference type="ChEBI" id="CHEBI:29999"/>
        <dbReference type="ChEBI" id="CHEBI:57287"/>
        <dbReference type="ChEBI" id="CHEBI:58343"/>
        <dbReference type="ChEBI" id="CHEBI:64479"/>
        <dbReference type="EC" id="2.7.8.7"/>
    </reaction>
</comment>
<comment type="cofactor">
    <cofactor evidence="1">
        <name>Mg(2+)</name>
        <dbReference type="ChEBI" id="CHEBI:18420"/>
    </cofactor>
</comment>
<comment type="subcellular location">
    <subcellularLocation>
        <location evidence="1">Cytoplasm</location>
    </subcellularLocation>
</comment>
<comment type="similarity">
    <text evidence="1">Belongs to the P-Pant transferase superfamily. AcpS family.</text>
</comment>
<dbReference type="EC" id="2.7.8.7" evidence="1"/>
<dbReference type="EMBL" id="BX640428">
    <property type="protein sequence ID" value="CAE37064.1"/>
    <property type="molecule type" value="Genomic_DNA"/>
</dbReference>
<dbReference type="RefSeq" id="WP_010928193.1">
    <property type="nucleotide sequence ID" value="NC_002928.3"/>
</dbReference>
<dbReference type="SMR" id="Q7W9J6"/>
<dbReference type="KEGG" id="bpa:BPP1763"/>
<dbReference type="HOGENOM" id="CLU_089696_3_1_4"/>
<dbReference type="Proteomes" id="UP000001421">
    <property type="component" value="Chromosome"/>
</dbReference>
<dbReference type="GO" id="GO:0005737">
    <property type="term" value="C:cytoplasm"/>
    <property type="evidence" value="ECO:0007669"/>
    <property type="project" value="UniProtKB-SubCell"/>
</dbReference>
<dbReference type="GO" id="GO:0008897">
    <property type="term" value="F:holo-[acyl-carrier-protein] synthase activity"/>
    <property type="evidence" value="ECO:0007669"/>
    <property type="project" value="UniProtKB-UniRule"/>
</dbReference>
<dbReference type="GO" id="GO:0000287">
    <property type="term" value="F:magnesium ion binding"/>
    <property type="evidence" value="ECO:0007669"/>
    <property type="project" value="UniProtKB-UniRule"/>
</dbReference>
<dbReference type="GO" id="GO:0006633">
    <property type="term" value="P:fatty acid biosynthetic process"/>
    <property type="evidence" value="ECO:0007669"/>
    <property type="project" value="UniProtKB-UniRule"/>
</dbReference>
<dbReference type="Gene3D" id="3.90.470.20">
    <property type="entry name" value="4'-phosphopantetheinyl transferase domain"/>
    <property type="match status" value="1"/>
</dbReference>
<dbReference type="HAMAP" id="MF_00101">
    <property type="entry name" value="AcpS"/>
    <property type="match status" value="1"/>
</dbReference>
<dbReference type="InterPro" id="IPR008278">
    <property type="entry name" value="4-PPantetheinyl_Trfase_dom"/>
</dbReference>
<dbReference type="InterPro" id="IPR037143">
    <property type="entry name" value="4-PPantetheinyl_Trfase_dom_sf"/>
</dbReference>
<dbReference type="InterPro" id="IPR002582">
    <property type="entry name" value="ACPS"/>
</dbReference>
<dbReference type="InterPro" id="IPR004568">
    <property type="entry name" value="Ppantetheine-prot_Trfase_dom"/>
</dbReference>
<dbReference type="NCBIfam" id="TIGR00516">
    <property type="entry name" value="acpS"/>
    <property type="match status" value="1"/>
</dbReference>
<dbReference type="NCBIfam" id="TIGR00556">
    <property type="entry name" value="pantethn_trn"/>
    <property type="match status" value="1"/>
</dbReference>
<dbReference type="Pfam" id="PF01648">
    <property type="entry name" value="ACPS"/>
    <property type="match status" value="1"/>
</dbReference>
<dbReference type="SUPFAM" id="SSF56214">
    <property type="entry name" value="4'-phosphopantetheinyl transferase"/>
    <property type="match status" value="1"/>
</dbReference>
<name>ACPS_BORPA</name>
<protein>
    <recommendedName>
        <fullName evidence="1">Holo-[acyl-carrier-protein] synthase</fullName>
        <shortName evidence="1">Holo-ACP synthase</shortName>
        <ecNumber evidence="1">2.7.8.7</ecNumber>
    </recommendedName>
    <alternativeName>
        <fullName evidence="1">4'-phosphopantetheinyl transferase AcpS</fullName>
    </alternativeName>
</protein>
<keyword id="KW-0963">Cytoplasm</keyword>
<keyword id="KW-0275">Fatty acid biosynthesis</keyword>
<keyword id="KW-0276">Fatty acid metabolism</keyword>
<keyword id="KW-0444">Lipid biosynthesis</keyword>
<keyword id="KW-0443">Lipid metabolism</keyword>
<keyword id="KW-0460">Magnesium</keyword>
<keyword id="KW-0479">Metal-binding</keyword>
<keyword id="KW-0808">Transferase</keyword>
<gene>
    <name evidence="1" type="primary">acpS</name>
    <name type="ordered locus">BPP1763</name>
</gene>
<reference key="1">
    <citation type="journal article" date="2003" name="Nat. Genet.">
        <title>Comparative analysis of the genome sequences of Bordetella pertussis, Bordetella parapertussis and Bordetella bronchiseptica.</title>
        <authorList>
            <person name="Parkhill J."/>
            <person name="Sebaihia M."/>
            <person name="Preston A."/>
            <person name="Murphy L.D."/>
            <person name="Thomson N.R."/>
            <person name="Harris D.E."/>
            <person name="Holden M.T.G."/>
            <person name="Churcher C.M."/>
            <person name="Bentley S.D."/>
            <person name="Mungall K.L."/>
            <person name="Cerdeno-Tarraga A.-M."/>
            <person name="Temple L."/>
            <person name="James K.D."/>
            <person name="Harris B."/>
            <person name="Quail M.A."/>
            <person name="Achtman M."/>
            <person name="Atkin R."/>
            <person name="Baker S."/>
            <person name="Basham D."/>
            <person name="Bason N."/>
            <person name="Cherevach I."/>
            <person name="Chillingworth T."/>
            <person name="Collins M."/>
            <person name="Cronin A."/>
            <person name="Davis P."/>
            <person name="Doggett J."/>
            <person name="Feltwell T."/>
            <person name="Goble A."/>
            <person name="Hamlin N."/>
            <person name="Hauser H."/>
            <person name="Holroyd S."/>
            <person name="Jagels K."/>
            <person name="Leather S."/>
            <person name="Moule S."/>
            <person name="Norberczak H."/>
            <person name="O'Neil S."/>
            <person name="Ormond D."/>
            <person name="Price C."/>
            <person name="Rabbinowitsch E."/>
            <person name="Rutter S."/>
            <person name="Sanders M."/>
            <person name="Saunders D."/>
            <person name="Seeger K."/>
            <person name="Sharp S."/>
            <person name="Simmonds M."/>
            <person name="Skelton J."/>
            <person name="Squares R."/>
            <person name="Squares S."/>
            <person name="Stevens K."/>
            <person name="Unwin L."/>
            <person name="Whitehead S."/>
            <person name="Barrell B.G."/>
            <person name="Maskell D.J."/>
        </authorList>
    </citation>
    <scope>NUCLEOTIDE SEQUENCE [LARGE SCALE GENOMIC DNA]</scope>
    <source>
        <strain>12822 / ATCC BAA-587 / NCTC 13253</strain>
    </source>
</reference>
<evidence type="ECO:0000255" key="1">
    <source>
        <dbReference type="HAMAP-Rule" id="MF_00101"/>
    </source>
</evidence>
<organism>
    <name type="scientific">Bordetella parapertussis (strain 12822 / ATCC BAA-587 / NCTC 13253)</name>
    <dbReference type="NCBI Taxonomy" id="257311"/>
    <lineage>
        <taxon>Bacteria</taxon>
        <taxon>Pseudomonadati</taxon>
        <taxon>Pseudomonadota</taxon>
        <taxon>Betaproteobacteria</taxon>
        <taxon>Burkholderiales</taxon>
        <taxon>Alcaligenaceae</taxon>
        <taxon>Bordetella</taxon>
    </lineage>
</organism>